<comment type="function">
    <text evidence="1">Catalyzes the folate-dependent formation of 5-methyl-uridine at position 54 (M-5-U54) in all tRNAs.</text>
</comment>
<comment type="catalytic activity">
    <reaction evidence="1">
        <text>uridine(54) in tRNA + (6R)-5,10-methylene-5,6,7,8-tetrahydrofolate + NADH + H(+) = 5-methyluridine(54) in tRNA + (6S)-5,6,7,8-tetrahydrofolate + NAD(+)</text>
        <dbReference type="Rhea" id="RHEA:16873"/>
        <dbReference type="Rhea" id="RHEA-COMP:10167"/>
        <dbReference type="Rhea" id="RHEA-COMP:10193"/>
        <dbReference type="ChEBI" id="CHEBI:15378"/>
        <dbReference type="ChEBI" id="CHEBI:15636"/>
        <dbReference type="ChEBI" id="CHEBI:57453"/>
        <dbReference type="ChEBI" id="CHEBI:57540"/>
        <dbReference type="ChEBI" id="CHEBI:57945"/>
        <dbReference type="ChEBI" id="CHEBI:65315"/>
        <dbReference type="ChEBI" id="CHEBI:74447"/>
        <dbReference type="EC" id="2.1.1.74"/>
    </reaction>
</comment>
<comment type="catalytic activity">
    <reaction evidence="1">
        <text>uridine(54) in tRNA + (6R)-5,10-methylene-5,6,7,8-tetrahydrofolate + NADPH + H(+) = 5-methyluridine(54) in tRNA + (6S)-5,6,7,8-tetrahydrofolate + NADP(+)</text>
        <dbReference type="Rhea" id="RHEA:62372"/>
        <dbReference type="Rhea" id="RHEA-COMP:10167"/>
        <dbReference type="Rhea" id="RHEA-COMP:10193"/>
        <dbReference type="ChEBI" id="CHEBI:15378"/>
        <dbReference type="ChEBI" id="CHEBI:15636"/>
        <dbReference type="ChEBI" id="CHEBI:57453"/>
        <dbReference type="ChEBI" id="CHEBI:57783"/>
        <dbReference type="ChEBI" id="CHEBI:58349"/>
        <dbReference type="ChEBI" id="CHEBI:65315"/>
        <dbReference type="ChEBI" id="CHEBI:74447"/>
        <dbReference type="EC" id="2.1.1.74"/>
    </reaction>
</comment>
<comment type="cofactor">
    <cofactor evidence="1">
        <name>FAD</name>
        <dbReference type="ChEBI" id="CHEBI:57692"/>
    </cofactor>
</comment>
<comment type="subcellular location">
    <subcellularLocation>
        <location evidence="1">Cytoplasm</location>
    </subcellularLocation>
</comment>
<comment type="similarity">
    <text evidence="1">Belongs to the MnmG family. TrmFO subfamily.</text>
</comment>
<protein>
    <recommendedName>
        <fullName evidence="1">Methylenetetrahydrofolate--tRNA-(uracil-5-)-methyltransferase TrmFO</fullName>
        <ecNumber evidence="1">2.1.1.74</ecNumber>
    </recommendedName>
    <alternativeName>
        <fullName evidence="1">Folate-dependent tRNA (uracil-5-)-methyltransferase</fullName>
    </alternativeName>
    <alternativeName>
        <fullName evidence="1">Folate-dependent tRNA(M-5-U54)-methyltransferase</fullName>
    </alternativeName>
</protein>
<name>TRMFO_STRZT</name>
<reference key="1">
    <citation type="journal article" date="2010" name="Genome Biol.">
        <title>Structure and dynamics of the pan-genome of Streptococcus pneumoniae and closely related species.</title>
        <authorList>
            <person name="Donati C."/>
            <person name="Hiller N.L."/>
            <person name="Tettelin H."/>
            <person name="Muzzi A."/>
            <person name="Croucher N.J."/>
            <person name="Angiuoli S.V."/>
            <person name="Oggioni M."/>
            <person name="Dunning Hotopp J.C."/>
            <person name="Hu F.Z."/>
            <person name="Riley D.R."/>
            <person name="Covacci A."/>
            <person name="Mitchell T.J."/>
            <person name="Bentley S.D."/>
            <person name="Kilian M."/>
            <person name="Ehrlich G.D."/>
            <person name="Rappuoli R."/>
            <person name="Moxon E.R."/>
            <person name="Masignani V."/>
        </authorList>
    </citation>
    <scope>NUCLEOTIDE SEQUENCE [LARGE SCALE GENOMIC DNA]</scope>
    <source>
        <strain>Taiwan19F-14</strain>
    </source>
</reference>
<gene>
    <name evidence="1" type="primary">trmFO</name>
    <name type="ordered locus">SPT_1261</name>
</gene>
<accession>C1CRV5</accession>
<dbReference type="EC" id="2.1.1.74" evidence="1"/>
<dbReference type="EMBL" id="CP000921">
    <property type="protein sequence ID" value="ACO22451.1"/>
    <property type="molecule type" value="Genomic_DNA"/>
</dbReference>
<dbReference type="RefSeq" id="WP_000083726.1">
    <property type="nucleotide sequence ID" value="NC_012469.1"/>
</dbReference>
<dbReference type="SMR" id="C1CRV5"/>
<dbReference type="KEGG" id="snt:SPT_1261"/>
<dbReference type="HOGENOM" id="CLU_033057_1_0_9"/>
<dbReference type="GO" id="GO:0005829">
    <property type="term" value="C:cytosol"/>
    <property type="evidence" value="ECO:0007669"/>
    <property type="project" value="TreeGrafter"/>
</dbReference>
<dbReference type="GO" id="GO:0050660">
    <property type="term" value="F:flavin adenine dinucleotide binding"/>
    <property type="evidence" value="ECO:0007669"/>
    <property type="project" value="UniProtKB-UniRule"/>
</dbReference>
<dbReference type="GO" id="GO:0047151">
    <property type="term" value="F:tRNA (uracil(54)-C5)-methyltransferase activity, 5,10-methylenetetrahydrofolate-dependent"/>
    <property type="evidence" value="ECO:0007669"/>
    <property type="project" value="UniProtKB-UniRule"/>
</dbReference>
<dbReference type="GO" id="GO:0030488">
    <property type="term" value="P:tRNA methylation"/>
    <property type="evidence" value="ECO:0007669"/>
    <property type="project" value="TreeGrafter"/>
</dbReference>
<dbReference type="GO" id="GO:0002098">
    <property type="term" value="P:tRNA wobble uridine modification"/>
    <property type="evidence" value="ECO:0007669"/>
    <property type="project" value="TreeGrafter"/>
</dbReference>
<dbReference type="FunFam" id="3.50.50.60:FF:000035">
    <property type="entry name" value="Methylenetetrahydrofolate--tRNA-(uracil-5-)-methyltransferase TrmFO"/>
    <property type="match status" value="1"/>
</dbReference>
<dbReference type="FunFam" id="3.50.50.60:FF:000040">
    <property type="entry name" value="Methylenetetrahydrofolate--tRNA-(uracil-5-)-methyltransferase TrmFO"/>
    <property type="match status" value="1"/>
</dbReference>
<dbReference type="Gene3D" id="3.50.50.60">
    <property type="entry name" value="FAD/NAD(P)-binding domain"/>
    <property type="match status" value="2"/>
</dbReference>
<dbReference type="HAMAP" id="MF_01037">
    <property type="entry name" value="TrmFO"/>
    <property type="match status" value="1"/>
</dbReference>
<dbReference type="InterPro" id="IPR036188">
    <property type="entry name" value="FAD/NAD-bd_sf"/>
</dbReference>
<dbReference type="InterPro" id="IPR002218">
    <property type="entry name" value="MnmG-rel"/>
</dbReference>
<dbReference type="InterPro" id="IPR020595">
    <property type="entry name" value="MnmG-rel_CS"/>
</dbReference>
<dbReference type="InterPro" id="IPR040131">
    <property type="entry name" value="MnmG_N"/>
</dbReference>
<dbReference type="InterPro" id="IPR004417">
    <property type="entry name" value="TrmFO"/>
</dbReference>
<dbReference type="NCBIfam" id="TIGR00137">
    <property type="entry name" value="gid_trmFO"/>
    <property type="match status" value="1"/>
</dbReference>
<dbReference type="NCBIfam" id="NF003739">
    <property type="entry name" value="PRK05335.1"/>
    <property type="match status" value="1"/>
</dbReference>
<dbReference type="PANTHER" id="PTHR11806">
    <property type="entry name" value="GLUCOSE INHIBITED DIVISION PROTEIN A"/>
    <property type="match status" value="1"/>
</dbReference>
<dbReference type="PANTHER" id="PTHR11806:SF2">
    <property type="entry name" value="METHYLENETETRAHYDROFOLATE--TRNA-(URACIL-5-)-METHYLTRANSFERASE TRMFO"/>
    <property type="match status" value="1"/>
</dbReference>
<dbReference type="Pfam" id="PF01134">
    <property type="entry name" value="GIDA"/>
    <property type="match status" value="1"/>
</dbReference>
<dbReference type="SUPFAM" id="SSF51905">
    <property type="entry name" value="FAD/NAD(P)-binding domain"/>
    <property type="match status" value="1"/>
</dbReference>
<dbReference type="PROSITE" id="PS01281">
    <property type="entry name" value="GIDA_2"/>
    <property type="match status" value="1"/>
</dbReference>
<evidence type="ECO:0000255" key="1">
    <source>
        <dbReference type="HAMAP-Rule" id="MF_01037"/>
    </source>
</evidence>
<proteinExistence type="inferred from homology"/>
<feature type="chain" id="PRO_1000149482" description="Methylenetetrahydrofolate--tRNA-(uracil-5-)-methyltransferase TrmFO">
    <location>
        <begin position="1"/>
        <end position="444"/>
    </location>
</feature>
<feature type="binding site" evidence="1">
    <location>
        <begin position="10"/>
        <end position="15"/>
    </location>
    <ligand>
        <name>FAD</name>
        <dbReference type="ChEBI" id="CHEBI:57692"/>
    </ligand>
</feature>
<keyword id="KW-0963">Cytoplasm</keyword>
<keyword id="KW-0274">FAD</keyword>
<keyword id="KW-0285">Flavoprotein</keyword>
<keyword id="KW-0489">Methyltransferase</keyword>
<keyword id="KW-0520">NAD</keyword>
<keyword id="KW-0521">NADP</keyword>
<keyword id="KW-0808">Transferase</keyword>
<keyword id="KW-0819">tRNA processing</keyword>
<organism>
    <name type="scientific">Streptococcus pneumoniae (strain Taiwan19F-14)</name>
    <dbReference type="NCBI Taxonomy" id="487213"/>
    <lineage>
        <taxon>Bacteria</taxon>
        <taxon>Bacillati</taxon>
        <taxon>Bacillota</taxon>
        <taxon>Bacilli</taxon>
        <taxon>Lactobacillales</taxon>
        <taxon>Streptococcaceae</taxon>
        <taxon>Streptococcus</taxon>
    </lineage>
</organism>
<sequence>MSQSYINVIGAGLAGSEAAYQIAERGIPVKLYEMRGVKSTPQHKTDNFAELVCSNSLRGDALTNAVGLLKEEMRRLGSVILESAEATRVPAGGALAVDRDGFSQMVTEKVVNHPLIEVVRDEITELPTDVITVVATGPLTSDALAEKIHALNDGDGFYFYDAAAPIIDVNTIDMSKVYLKSRYDKGEAAYLNAPMTKQEFMDFHEALVNAEEAPLNSFEKEKYFEGCMPIEVMAKRGIKTMLYGPMKPVGLEYPDDYTGPRDGEFKTPYAVVQLRQDNAAGSLYNIVGFQTHLKWGEQKRVFQMIPSLENAEFVRYGVMHRNSYMDSPNLLEQTYRSKKQPNLFFAGQMTGVEGYVESAASGLVAGINAARLFKEESEAIFPDTTAIGSLAHYITHADSKHFQPMNVNFGIIKELEGERIRDKKARYEKIAERALADLEEFLTV</sequence>